<reference key="1">
    <citation type="submission" date="2007-06" db="EMBL/GenBank/DDBJ databases">
        <title>Complete sequence of Sinorhizobium medicae WSM419 chromosome.</title>
        <authorList>
            <consortium name="US DOE Joint Genome Institute"/>
            <person name="Copeland A."/>
            <person name="Lucas S."/>
            <person name="Lapidus A."/>
            <person name="Barry K."/>
            <person name="Glavina del Rio T."/>
            <person name="Dalin E."/>
            <person name="Tice H."/>
            <person name="Pitluck S."/>
            <person name="Chain P."/>
            <person name="Malfatti S."/>
            <person name="Shin M."/>
            <person name="Vergez L."/>
            <person name="Schmutz J."/>
            <person name="Larimer F."/>
            <person name="Land M."/>
            <person name="Hauser L."/>
            <person name="Kyrpides N."/>
            <person name="Mikhailova N."/>
            <person name="Reeve W.G."/>
            <person name="Richardson P."/>
        </authorList>
    </citation>
    <scope>NUCLEOTIDE SEQUENCE [LARGE SCALE GENOMIC DNA]</scope>
    <source>
        <strain>WSM419</strain>
    </source>
</reference>
<sequence>MSEALNELASYIREARGALVAGSEVRYGELTLTTKAESLIALLTFLRDDVQCGFVSFIDVCGVDYPQRPDRFDVVYHLLSPRQNQRIRVKVATGENEPVPSITSVYPGADWFEREAYDMYGILFTGHPDLRRILTDYGFEGYPLRKDFPLTGFVEVRYDNEAKRVVYEPVELKQEFRNFDFLSPWEGTEYVLPGDEKAKSR</sequence>
<organism>
    <name type="scientific">Sinorhizobium medicae (strain WSM419)</name>
    <name type="common">Ensifer medicae</name>
    <dbReference type="NCBI Taxonomy" id="366394"/>
    <lineage>
        <taxon>Bacteria</taxon>
        <taxon>Pseudomonadati</taxon>
        <taxon>Pseudomonadota</taxon>
        <taxon>Alphaproteobacteria</taxon>
        <taxon>Hyphomicrobiales</taxon>
        <taxon>Rhizobiaceae</taxon>
        <taxon>Sinorhizobium/Ensifer group</taxon>
        <taxon>Sinorhizobium</taxon>
    </lineage>
</organism>
<keyword id="KW-0997">Cell inner membrane</keyword>
<keyword id="KW-1003">Cell membrane</keyword>
<keyword id="KW-0472">Membrane</keyword>
<keyword id="KW-0520">NAD</keyword>
<keyword id="KW-0874">Quinone</keyword>
<keyword id="KW-1278">Translocase</keyword>
<keyword id="KW-0813">Transport</keyword>
<keyword id="KW-0830">Ubiquinone</keyword>
<evidence type="ECO:0000255" key="1">
    <source>
        <dbReference type="HAMAP-Rule" id="MF_01357"/>
    </source>
</evidence>
<gene>
    <name evidence="1" type="primary">nuoC</name>
    <name type="ordered locus">Smed_0890</name>
</gene>
<feature type="chain" id="PRO_0000358199" description="NADH-quinone oxidoreductase subunit C">
    <location>
        <begin position="1"/>
        <end position="201"/>
    </location>
</feature>
<protein>
    <recommendedName>
        <fullName evidence="1">NADH-quinone oxidoreductase subunit C</fullName>
        <ecNumber evidence="1">7.1.1.-</ecNumber>
    </recommendedName>
    <alternativeName>
        <fullName evidence="1">NADH dehydrogenase I subunit C</fullName>
    </alternativeName>
    <alternativeName>
        <fullName evidence="1">NDH-1 subunit C</fullName>
    </alternativeName>
</protein>
<comment type="function">
    <text evidence="1">NDH-1 shuttles electrons from NADH, via FMN and iron-sulfur (Fe-S) centers, to quinones in the respiratory chain. The immediate electron acceptor for the enzyme in this species is believed to be ubiquinone. Couples the redox reaction to proton translocation (for every two electrons transferred, four hydrogen ions are translocated across the cytoplasmic membrane), and thus conserves the redox energy in a proton gradient.</text>
</comment>
<comment type="catalytic activity">
    <reaction evidence="1">
        <text>a quinone + NADH + 5 H(+)(in) = a quinol + NAD(+) + 4 H(+)(out)</text>
        <dbReference type="Rhea" id="RHEA:57888"/>
        <dbReference type="ChEBI" id="CHEBI:15378"/>
        <dbReference type="ChEBI" id="CHEBI:24646"/>
        <dbReference type="ChEBI" id="CHEBI:57540"/>
        <dbReference type="ChEBI" id="CHEBI:57945"/>
        <dbReference type="ChEBI" id="CHEBI:132124"/>
    </reaction>
</comment>
<comment type="subunit">
    <text evidence="1">NDH-1 is composed of 14 different subunits. Subunits NuoB, C, D, E, F, and G constitute the peripheral sector of the complex.</text>
</comment>
<comment type="subcellular location">
    <subcellularLocation>
        <location evidence="1">Cell inner membrane</location>
        <topology evidence="1">Peripheral membrane protein</topology>
        <orientation evidence="1">Cytoplasmic side</orientation>
    </subcellularLocation>
</comment>
<comment type="similarity">
    <text evidence="1">Belongs to the complex I 30 kDa subunit family.</text>
</comment>
<name>NUOC_SINMW</name>
<proteinExistence type="inferred from homology"/>
<accession>A6U7W5</accession>
<dbReference type="EC" id="7.1.1.-" evidence="1"/>
<dbReference type="EMBL" id="CP000738">
    <property type="protein sequence ID" value="ABR59745.1"/>
    <property type="molecule type" value="Genomic_DNA"/>
</dbReference>
<dbReference type="RefSeq" id="WP_011975083.1">
    <property type="nucleotide sequence ID" value="NC_009636.1"/>
</dbReference>
<dbReference type="RefSeq" id="YP_001326580.1">
    <property type="nucleotide sequence ID" value="NC_009636.1"/>
</dbReference>
<dbReference type="SMR" id="A6U7W5"/>
<dbReference type="STRING" id="366394.Smed_0890"/>
<dbReference type="KEGG" id="smd:Smed_0890"/>
<dbReference type="PATRIC" id="fig|366394.8.peg.4004"/>
<dbReference type="eggNOG" id="COG0852">
    <property type="taxonomic scope" value="Bacteria"/>
</dbReference>
<dbReference type="HOGENOM" id="CLU_042628_2_1_5"/>
<dbReference type="OrthoDB" id="9803286at2"/>
<dbReference type="Proteomes" id="UP000001108">
    <property type="component" value="Chromosome"/>
</dbReference>
<dbReference type="GO" id="GO:0005886">
    <property type="term" value="C:plasma membrane"/>
    <property type="evidence" value="ECO:0007669"/>
    <property type="project" value="UniProtKB-SubCell"/>
</dbReference>
<dbReference type="GO" id="GO:0008137">
    <property type="term" value="F:NADH dehydrogenase (ubiquinone) activity"/>
    <property type="evidence" value="ECO:0007669"/>
    <property type="project" value="InterPro"/>
</dbReference>
<dbReference type="GO" id="GO:0050136">
    <property type="term" value="F:NADH:ubiquinone reductase (non-electrogenic) activity"/>
    <property type="evidence" value="ECO:0007669"/>
    <property type="project" value="UniProtKB-UniRule"/>
</dbReference>
<dbReference type="GO" id="GO:0048038">
    <property type="term" value="F:quinone binding"/>
    <property type="evidence" value="ECO:0007669"/>
    <property type="project" value="UniProtKB-KW"/>
</dbReference>
<dbReference type="Gene3D" id="3.30.460.80">
    <property type="entry name" value="NADH:ubiquinone oxidoreductase, 30kDa subunit"/>
    <property type="match status" value="1"/>
</dbReference>
<dbReference type="HAMAP" id="MF_01357">
    <property type="entry name" value="NDH1_NuoC"/>
    <property type="match status" value="1"/>
</dbReference>
<dbReference type="InterPro" id="IPR010218">
    <property type="entry name" value="NADH_DH_suC"/>
</dbReference>
<dbReference type="InterPro" id="IPR037232">
    <property type="entry name" value="NADH_quin_OxRdtase_su_C/D-like"/>
</dbReference>
<dbReference type="InterPro" id="IPR001268">
    <property type="entry name" value="NADH_UbQ_OxRdtase_30kDa_su"/>
</dbReference>
<dbReference type="InterPro" id="IPR020396">
    <property type="entry name" value="NADH_UbQ_OxRdtase_CS"/>
</dbReference>
<dbReference type="NCBIfam" id="TIGR01961">
    <property type="entry name" value="NuoC_fam"/>
    <property type="match status" value="1"/>
</dbReference>
<dbReference type="NCBIfam" id="NF004730">
    <property type="entry name" value="PRK06074.1-1"/>
    <property type="match status" value="1"/>
</dbReference>
<dbReference type="NCBIfam" id="NF004733">
    <property type="entry name" value="PRK06074.1-5"/>
    <property type="match status" value="1"/>
</dbReference>
<dbReference type="PANTHER" id="PTHR10884:SF14">
    <property type="entry name" value="NADH DEHYDROGENASE [UBIQUINONE] IRON-SULFUR PROTEIN 3, MITOCHONDRIAL"/>
    <property type="match status" value="1"/>
</dbReference>
<dbReference type="PANTHER" id="PTHR10884">
    <property type="entry name" value="NADH DEHYDROGENASE UBIQUINONE IRON-SULFUR PROTEIN 3"/>
    <property type="match status" value="1"/>
</dbReference>
<dbReference type="Pfam" id="PF00329">
    <property type="entry name" value="Complex1_30kDa"/>
    <property type="match status" value="1"/>
</dbReference>
<dbReference type="SUPFAM" id="SSF143243">
    <property type="entry name" value="Nqo5-like"/>
    <property type="match status" value="1"/>
</dbReference>
<dbReference type="PROSITE" id="PS00542">
    <property type="entry name" value="COMPLEX1_30K"/>
    <property type="match status" value="1"/>
</dbReference>